<keyword id="KW-1185">Reference proteome</keyword>
<keyword id="KW-0687">Ribonucleoprotein</keyword>
<keyword id="KW-0689">Ribosomal protein</keyword>
<sequence length="198" mass="21955">MAKKKQIGRRVEGWKAKSWYKVYVPEAFGSTPIGETIAADSANLVGRVMSTTLGEIAQDFAKQHIKMKFKISRVAGDAAYTEFIGHELTKDYLRSLVKRRTSRIDSHIMGSTKDGKRIHLTVTCYTLIGANSSQIHAIRNVISAQMATFVAQNDWATVVDGIVTGSISRDMLAQVKGIFPIRRIEVIKSKIESKVIIA</sequence>
<comment type="similarity">
    <text evidence="1">Belongs to the eukaryotic ribosomal protein eS1 family.</text>
</comment>
<accession>B8GFN8</accession>
<name>RS3A_METPE</name>
<reference key="1">
    <citation type="journal article" date="2015" name="Genome Announc.">
        <title>Complete Genome Sequence of Methanosphaerula palustris E1-9CT, a Hydrogenotrophic Methanogen Isolated from a Minerotrophic Fen Peatland.</title>
        <authorList>
            <person name="Cadillo-Quiroz H."/>
            <person name="Browne P."/>
            <person name="Kyrpides N."/>
            <person name="Woyke T."/>
            <person name="Goodwin L."/>
            <person name="Detter C."/>
            <person name="Yavitt J.B."/>
            <person name="Zinder S.H."/>
        </authorList>
    </citation>
    <scope>NUCLEOTIDE SEQUENCE [LARGE SCALE GENOMIC DNA]</scope>
    <source>
        <strain>ATCC BAA-1556 / DSM 19958 / E1-9c</strain>
    </source>
</reference>
<proteinExistence type="inferred from homology"/>
<organism>
    <name type="scientific">Methanosphaerula palustris (strain ATCC BAA-1556 / DSM 19958 / E1-9c)</name>
    <dbReference type="NCBI Taxonomy" id="521011"/>
    <lineage>
        <taxon>Archaea</taxon>
        <taxon>Methanobacteriati</taxon>
        <taxon>Methanobacteriota</taxon>
        <taxon>Stenosarchaea group</taxon>
        <taxon>Methanomicrobia</taxon>
        <taxon>Methanomicrobiales</taxon>
        <taxon>Methanoregulaceae</taxon>
        <taxon>Methanosphaerula</taxon>
    </lineage>
</organism>
<protein>
    <recommendedName>
        <fullName evidence="1">Small ribosomal subunit protein eS1</fullName>
    </recommendedName>
    <alternativeName>
        <fullName evidence="2">30S ribosomal protein S3Ae</fullName>
    </alternativeName>
    <alternativeName>
        <fullName evidence="1">Ribosomal protein S1e</fullName>
    </alternativeName>
</protein>
<evidence type="ECO:0000255" key="1">
    <source>
        <dbReference type="HAMAP-Rule" id="MF_00359"/>
    </source>
</evidence>
<evidence type="ECO:0000305" key="2"/>
<dbReference type="EMBL" id="CP001338">
    <property type="protein sequence ID" value="ACL17921.1"/>
    <property type="molecule type" value="Genomic_DNA"/>
</dbReference>
<dbReference type="RefSeq" id="WP_012619240.1">
    <property type="nucleotide sequence ID" value="NC_011832.1"/>
</dbReference>
<dbReference type="SMR" id="B8GFN8"/>
<dbReference type="STRING" id="521011.Mpal_2657"/>
<dbReference type="GeneID" id="7272479"/>
<dbReference type="KEGG" id="mpl:Mpal_2657"/>
<dbReference type="eggNOG" id="arCOG04186">
    <property type="taxonomic scope" value="Archaea"/>
</dbReference>
<dbReference type="HOGENOM" id="CLU_062507_1_0_2"/>
<dbReference type="OrthoDB" id="30639at2157"/>
<dbReference type="Proteomes" id="UP000002457">
    <property type="component" value="Chromosome"/>
</dbReference>
<dbReference type="GO" id="GO:1990904">
    <property type="term" value="C:ribonucleoprotein complex"/>
    <property type="evidence" value="ECO:0007669"/>
    <property type="project" value="UniProtKB-KW"/>
</dbReference>
<dbReference type="GO" id="GO:0005840">
    <property type="term" value="C:ribosome"/>
    <property type="evidence" value="ECO:0007669"/>
    <property type="project" value="UniProtKB-KW"/>
</dbReference>
<dbReference type="GO" id="GO:0003735">
    <property type="term" value="F:structural constituent of ribosome"/>
    <property type="evidence" value="ECO:0007669"/>
    <property type="project" value="InterPro"/>
</dbReference>
<dbReference type="GO" id="GO:0006412">
    <property type="term" value="P:translation"/>
    <property type="evidence" value="ECO:0007669"/>
    <property type="project" value="UniProtKB-UniRule"/>
</dbReference>
<dbReference type="HAMAP" id="MF_00359">
    <property type="entry name" value="Ribosomal_eS1"/>
    <property type="match status" value="1"/>
</dbReference>
<dbReference type="InterPro" id="IPR001593">
    <property type="entry name" value="Ribosomal_eS1"/>
</dbReference>
<dbReference type="InterPro" id="IPR030838">
    <property type="entry name" value="Ribosomal_eS1_arc"/>
</dbReference>
<dbReference type="NCBIfam" id="NF003142">
    <property type="entry name" value="PRK04057.1"/>
    <property type="match status" value="1"/>
</dbReference>
<dbReference type="Pfam" id="PF01015">
    <property type="entry name" value="Ribosomal_S3Ae"/>
    <property type="match status" value="1"/>
</dbReference>
<dbReference type="SMART" id="SM01397">
    <property type="entry name" value="Ribosomal_S3Ae"/>
    <property type="match status" value="1"/>
</dbReference>
<feature type="chain" id="PRO_1000133502" description="Small ribosomal subunit protein eS1">
    <location>
        <begin position="1"/>
        <end position="198"/>
    </location>
</feature>
<gene>
    <name evidence="1" type="primary">rps3ae</name>
    <name type="ordered locus">Mpal_2657</name>
</gene>